<name>DTD_DEIGD</name>
<feature type="chain" id="PRO_0000259279" description="D-aminoacyl-tRNA deacylase">
    <location>
        <begin position="1"/>
        <end position="148"/>
    </location>
</feature>
<feature type="short sequence motif" description="Gly-cisPro motif, important for rejection of L-amino acids" evidence="1">
    <location>
        <begin position="137"/>
        <end position="138"/>
    </location>
</feature>
<comment type="function">
    <text evidence="1">An aminoacyl-tRNA editing enzyme that deacylates mischarged D-aminoacyl-tRNAs. Also deacylates mischarged glycyl-tRNA(Ala), protecting cells against glycine mischarging by AlaRS. Acts via tRNA-based rather than protein-based catalysis; rejects L-amino acids rather than detecting D-amino acids in the active site. By recycling D-aminoacyl-tRNA to D-amino acids and free tRNA molecules, this enzyme counteracts the toxicity associated with the formation of D-aminoacyl-tRNA entities in vivo and helps enforce protein L-homochirality.</text>
</comment>
<comment type="catalytic activity">
    <reaction evidence="1">
        <text>glycyl-tRNA(Ala) + H2O = tRNA(Ala) + glycine + H(+)</text>
        <dbReference type="Rhea" id="RHEA:53744"/>
        <dbReference type="Rhea" id="RHEA-COMP:9657"/>
        <dbReference type="Rhea" id="RHEA-COMP:13640"/>
        <dbReference type="ChEBI" id="CHEBI:15377"/>
        <dbReference type="ChEBI" id="CHEBI:15378"/>
        <dbReference type="ChEBI" id="CHEBI:57305"/>
        <dbReference type="ChEBI" id="CHEBI:78442"/>
        <dbReference type="ChEBI" id="CHEBI:78522"/>
        <dbReference type="EC" id="3.1.1.96"/>
    </reaction>
</comment>
<comment type="catalytic activity">
    <reaction evidence="1">
        <text>a D-aminoacyl-tRNA + H2O = a tRNA + a D-alpha-amino acid + H(+)</text>
        <dbReference type="Rhea" id="RHEA:13953"/>
        <dbReference type="Rhea" id="RHEA-COMP:10123"/>
        <dbReference type="Rhea" id="RHEA-COMP:10124"/>
        <dbReference type="ChEBI" id="CHEBI:15377"/>
        <dbReference type="ChEBI" id="CHEBI:15378"/>
        <dbReference type="ChEBI" id="CHEBI:59871"/>
        <dbReference type="ChEBI" id="CHEBI:78442"/>
        <dbReference type="ChEBI" id="CHEBI:79333"/>
        <dbReference type="EC" id="3.1.1.96"/>
    </reaction>
</comment>
<comment type="subunit">
    <text evidence="1">Homodimer.</text>
</comment>
<comment type="subcellular location">
    <subcellularLocation>
        <location evidence="1">Cytoplasm</location>
    </subcellularLocation>
</comment>
<comment type="domain">
    <text evidence="1">A Gly-cisPro motif from one monomer fits into the active site of the other monomer to allow specific chiral rejection of L-amino acids.</text>
</comment>
<comment type="similarity">
    <text evidence="1">Belongs to the DTD family.</text>
</comment>
<sequence length="148" mass="15658">MRAVLQRVTRATCTVEGRVTGATGPGLLILLGVAPEDTPETAWRLAAKIVKLRVFADETGRMNRSVQDIGGGILSISQFTLYADTRRGNRPGFSGAAAPEHARALYAEFNAALRAQGVAVGEGVFGAHMMLDLTNDGPVTLFLDTAES</sequence>
<protein>
    <recommendedName>
        <fullName evidence="1">D-aminoacyl-tRNA deacylase</fullName>
        <shortName evidence="1">DTD</shortName>
        <ecNumber evidence="1">3.1.1.96</ecNumber>
    </recommendedName>
    <alternativeName>
        <fullName evidence="1">Gly-tRNA(Ala) deacylase</fullName>
    </alternativeName>
</protein>
<proteinExistence type="inferred from homology"/>
<dbReference type="EC" id="3.1.1.96" evidence="1"/>
<dbReference type="EMBL" id="CP000359">
    <property type="protein sequence ID" value="ABF45812.1"/>
    <property type="molecule type" value="Genomic_DNA"/>
</dbReference>
<dbReference type="RefSeq" id="WP_011530646.1">
    <property type="nucleotide sequence ID" value="NC_008025.1"/>
</dbReference>
<dbReference type="SMR" id="Q1IY72"/>
<dbReference type="STRING" id="319795.Dgeo_1517"/>
<dbReference type="KEGG" id="dge:Dgeo_1517"/>
<dbReference type="eggNOG" id="COG1490">
    <property type="taxonomic scope" value="Bacteria"/>
</dbReference>
<dbReference type="HOGENOM" id="CLU_076901_1_0_0"/>
<dbReference type="Proteomes" id="UP000002431">
    <property type="component" value="Chromosome"/>
</dbReference>
<dbReference type="GO" id="GO:0005737">
    <property type="term" value="C:cytoplasm"/>
    <property type="evidence" value="ECO:0007669"/>
    <property type="project" value="UniProtKB-SubCell"/>
</dbReference>
<dbReference type="GO" id="GO:0051500">
    <property type="term" value="F:D-tyrosyl-tRNA(Tyr) deacylase activity"/>
    <property type="evidence" value="ECO:0007669"/>
    <property type="project" value="TreeGrafter"/>
</dbReference>
<dbReference type="GO" id="GO:0106026">
    <property type="term" value="F:Gly-tRNA(Ala) deacylase activity"/>
    <property type="evidence" value="ECO:0007669"/>
    <property type="project" value="UniProtKB-UniRule"/>
</dbReference>
<dbReference type="GO" id="GO:0043908">
    <property type="term" value="F:Ser(Gly)-tRNA(Ala) hydrolase activity"/>
    <property type="evidence" value="ECO:0007669"/>
    <property type="project" value="UniProtKB-UniRule"/>
</dbReference>
<dbReference type="GO" id="GO:0000049">
    <property type="term" value="F:tRNA binding"/>
    <property type="evidence" value="ECO:0007669"/>
    <property type="project" value="UniProtKB-UniRule"/>
</dbReference>
<dbReference type="GO" id="GO:0019478">
    <property type="term" value="P:D-amino acid catabolic process"/>
    <property type="evidence" value="ECO:0007669"/>
    <property type="project" value="UniProtKB-UniRule"/>
</dbReference>
<dbReference type="CDD" id="cd00563">
    <property type="entry name" value="Dtyr_deacylase"/>
    <property type="match status" value="1"/>
</dbReference>
<dbReference type="FunFam" id="3.50.80.10:FF:000001">
    <property type="entry name" value="D-aminoacyl-tRNA deacylase"/>
    <property type="match status" value="1"/>
</dbReference>
<dbReference type="Gene3D" id="3.50.80.10">
    <property type="entry name" value="D-tyrosyl-tRNA(Tyr) deacylase"/>
    <property type="match status" value="1"/>
</dbReference>
<dbReference type="HAMAP" id="MF_00518">
    <property type="entry name" value="Deacylase_Dtd"/>
    <property type="match status" value="1"/>
</dbReference>
<dbReference type="InterPro" id="IPR003732">
    <property type="entry name" value="Daa-tRNA_deacyls_DTD"/>
</dbReference>
<dbReference type="InterPro" id="IPR023509">
    <property type="entry name" value="DTD-like_sf"/>
</dbReference>
<dbReference type="NCBIfam" id="TIGR00256">
    <property type="entry name" value="D-aminoacyl-tRNA deacylase"/>
    <property type="match status" value="1"/>
</dbReference>
<dbReference type="PANTHER" id="PTHR10472:SF5">
    <property type="entry name" value="D-AMINOACYL-TRNA DEACYLASE 1"/>
    <property type="match status" value="1"/>
</dbReference>
<dbReference type="PANTHER" id="PTHR10472">
    <property type="entry name" value="D-TYROSYL-TRNA TYR DEACYLASE"/>
    <property type="match status" value="1"/>
</dbReference>
<dbReference type="Pfam" id="PF02580">
    <property type="entry name" value="Tyr_Deacylase"/>
    <property type="match status" value="1"/>
</dbReference>
<dbReference type="SUPFAM" id="SSF69500">
    <property type="entry name" value="DTD-like"/>
    <property type="match status" value="1"/>
</dbReference>
<keyword id="KW-0963">Cytoplasm</keyword>
<keyword id="KW-0378">Hydrolase</keyword>
<keyword id="KW-0694">RNA-binding</keyword>
<keyword id="KW-0820">tRNA-binding</keyword>
<gene>
    <name evidence="1" type="primary">dtd</name>
    <name type="ordered locus">Dgeo_1517</name>
</gene>
<reference key="1">
    <citation type="submission" date="2006-04" db="EMBL/GenBank/DDBJ databases">
        <title>Complete sequence of chromosome of Deinococcus geothermalis DSM 11300.</title>
        <authorList>
            <person name="Copeland A."/>
            <person name="Lucas S."/>
            <person name="Lapidus A."/>
            <person name="Barry K."/>
            <person name="Detter J.C."/>
            <person name="Glavina del Rio T."/>
            <person name="Hammon N."/>
            <person name="Israni S."/>
            <person name="Dalin E."/>
            <person name="Tice H."/>
            <person name="Pitluck S."/>
            <person name="Brettin T."/>
            <person name="Bruce D."/>
            <person name="Han C."/>
            <person name="Tapia R."/>
            <person name="Saunders E."/>
            <person name="Gilna P."/>
            <person name="Schmutz J."/>
            <person name="Larimer F."/>
            <person name="Land M."/>
            <person name="Hauser L."/>
            <person name="Kyrpides N."/>
            <person name="Kim E."/>
            <person name="Daly M.J."/>
            <person name="Fredrickson J.K."/>
            <person name="Makarova K.S."/>
            <person name="Gaidamakova E.K."/>
            <person name="Zhai M."/>
            <person name="Richardson P."/>
        </authorList>
    </citation>
    <scope>NUCLEOTIDE SEQUENCE [LARGE SCALE GENOMIC DNA]</scope>
    <source>
        <strain>DSM 11300 / CIP 105573 / AG-3a</strain>
    </source>
</reference>
<evidence type="ECO:0000255" key="1">
    <source>
        <dbReference type="HAMAP-Rule" id="MF_00518"/>
    </source>
</evidence>
<organism>
    <name type="scientific">Deinococcus geothermalis (strain DSM 11300 / CIP 105573 / AG-3a)</name>
    <dbReference type="NCBI Taxonomy" id="319795"/>
    <lineage>
        <taxon>Bacteria</taxon>
        <taxon>Thermotogati</taxon>
        <taxon>Deinococcota</taxon>
        <taxon>Deinococci</taxon>
        <taxon>Deinococcales</taxon>
        <taxon>Deinococcaceae</taxon>
        <taxon>Deinococcus</taxon>
    </lineage>
</organism>
<accession>Q1IY72</accession>